<comment type="similarity">
    <text evidence="1">Belongs to the UPF0309 family.</text>
</comment>
<dbReference type="EMBL" id="AL596173">
    <property type="protein sequence ID" value="CAC98020.1"/>
    <property type="molecule type" value="Genomic_DNA"/>
</dbReference>
<dbReference type="PIR" id="AD1781">
    <property type="entry name" value="AD1781"/>
</dbReference>
<dbReference type="RefSeq" id="WP_010991378.1">
    <property type="nucleotide sequence ID" value="NC_003212.1"/>
</dbReference>
<dbReference type="SMR" id="Q927J4"/>
<dbReference type="STRING" id="272626.gene:17567181"/>
<dbReference type="GeneID" id="93236067"/>
<dbReference type="KEGG" id="lin:lin2794"/>
<dbReference type="eggNOG" id="COG4821">
    <property type="taxonomic scope" value="Bacteria"/>
</dbReference>
<dbReference type="HOGENOM" id="CLU_089975_0_0_9"/>
<dbReference type="OrthoDB" id="9805185at2"/>
<dbReference type="Proteomes" id="UP000002513">
    <property type="component" value="Chromosome"/>
</dbReference>
<dbReference type="GO" id="GO:0097367">
    <property type="term" value="F:carbohydrate derivative binding"/>
    <property type="evidence" value="ECO:0007669"/>
    <property type="project" value="InterPro"/>
</dbReference>
<dbReference type="GO" id="GO:1901135">
    <property type="term" value="P:carbohydrate derivative metabolic process"/>
    <property type="evidence" value="ECO:0007669"/>
    <property type="project" value="InterPro"/>
</dbReference>
<dbReference type="CDD" id="cd05013">
    <property type="entry name" value="SIS_RpiR"/>
    <property type="match status" value="1"/>
</dbReference>
<dbReference type="Gene3D" id="3.40.50.10490">
    <property type="entry name" value="Glucose-6-phosphate isomerase like protein, domain 1"/>
    <property type="match status" value="1"/>
</dbReference>
<dbReference type="HAMAP" id="MF_01240">
    <property type="entry name" value="UPF0309"/>
    <property type="match status" value="1"/>
</dbReference>
<dbReference type="InterPro" id="IPR035472">
    <property type="entry name" value="RpiR-like_SIS"/>
</dbReference>
<dbReference type="InterPro" id="IPR001347">
    <property type="entry name" value="SIS_dom"/>
</dbReference>
<dbReference type="InterPro" id="IPR046348">
    <property type="entry name" value="SIS_dom_sf"/>
</dbReference>
<dbReference type="InterPro" id="IPR050099">
    <property type="entry name" value="SIS_GmhA/DiaA_subfam"/>
</dbReference>
<dbReference type="InterPro" id="IPR022951">
    <property type="entry name" value="UPF0309"/>
</dbReference>
<dbReference type="NCBIfam" id="NF002805">
    <property type="entry name" value="PRK02947.1"/>
    <property type="match status" value="1"/>
</dbReference>
<dbReference type="PANTHER" id="PTHR30390:SF7">
    <property type="entry name" value="PHOSPHOHEPTOSE ISOMERASE"/>
    <property type="match status" value="1"/>
</dbReference>
<dbReference type="PANTHER" id="PTHR30390">
    <property type="entry name" value="SEDOHEPTULOSE 7-PHOSPHATE ISOMERASE / DNAA INITIATOR-ASSOCIATING FACTOR FOR REPLICATION INITIATION"/>
    <property type="match status" value="1"/>
</dbReference>
<dbReference type="Pfam" id="PF13580">
    <property type="entry name" value="SIS_2"/>
    <property type="match status" value="1"/>
</dbReference>
<dbReference type="SUPFAM" id="SSF53697">
    <property type="entry name" value="SIS domain"/>
    <property type="match status" value="1"/>
</dbReference>
<dbReference type="PROSITE" id="PS51464">
    <property type="entry name" value="SIS"/>
    <property type="match status" value="1"/>
</dbReference>
<name>Y2794_LISIN</name>
<gene>
    <name type="ordered locus">lin2794</name>
</gene>
<organism>
    <name type="scientific">Listeria innocua serovar 6a (strain ATCC BAA-680 / CLIP 11262)</name>
    <dbReference type="NCBI Taxonomy" id="272626"/>
    <lineage>
        <taxon>Bacteria</taxon>
        <taxon>Bacillati</taxon>
        <taxon>Bacillota</taxon>
        <taxon>Bacilli</taxon>
        <taxon>Bacillales</taxon>
        <taxon>Listeriaceae</taxon>
        <taxon>Listeria</taxon>
    </lineage>
</organism>
<feature type="chain" id="PRO_0000068182" description="UPF0309 protein lin2794">
    <location>
        <begin position="1"/>
        <end position="247"/>
    </location>
</feature>
<feature type="domain" description="SIS" evidence="1">
    <location>
        <begin position="31"/>
        <end position="214"/>
    </location>
</feature>
<proteinExistence type="inferred from homology"/>
<reference key="1">
    <citation type="journal article" date="2001" name="Science">
        <title>Comparative genomics of Listeria species.</title>
        <authorList>
            <person name="Glaser P."/>
            <person name="Frangeul L."/>
            <person name="Buchrieser C."/>
            <person name="Rusniok C."/>
            <person name="Amend A."/>
            <person name="Baquero F."/>
            <person name="Berche P."/>
            <person name="Bloecker H."/>
            <person name="Brandt P."/>
            <person name="Chakraborty T."/>
            <person name="Charbit A."/>
            <person name="Chetouani F."/>
            <person name="Couve E."/>
            <person name="de Daruvar A."/>
            <person name="Dehoux P."/>
            <person name="Domann E."/>
            <person name="Dominguez-Bernal G."/>
            <person name="Duchaud E."/>
            <person name="Durant L."/>
            <person name="Dussurget O."/>
            <person name="Entian K.-D."/>
            <person name="Fsihi H."/>
            <person name="Garcia-del Portillo F."/>
            <person name="Garrido P."/>
            <person name="Gautier L."/>
            <person name="Goebel W."/>
            <person name="Gomez-Lopez N."/>
            <person name="Hain T."/>
            <person name="Hauf J."/>
            <person name="Jackson D."/>
            <person name="Jones L.-M."/>
            <person name="Kaerst U."/>
            <person name="Kreft J."/>
            <person name="Kuhn M."/>
            <person name="Kunst F."/>
            <person name="Kurapkat G."/>
            <person name="Madueno E."/>
            <person name="Maitournam A."/>
            <person name="Mata Vicente J."/>
            <person name="Ng E."/>
            <person name="Nedjari H."/>
            <person name="Nordsiek G."/>
            <person name="Novella S."/>
            <person name="de Pablos B."/>
            <person name="Perez-Diaz J.-C."/>
            <person name="Purcell R."/>
            <person name="Remmel B."/>
            <person name="Rose M."/>
            <person name="Schlueter T."/>
            <person name="Simoes N."/>
            <person name="Tierrez A."/>
            <person name="Vazquez-Boland J.-A."/>
            <person name="Voss H."/>
            <person name="Wehland J."/>
            <person name="Cossart P."/>
        </authorList>
    </citation>
    <scope>NUCLEOTIDE SEQUENCE [LARGE SCALE GENOMIC DNA]</scope>
    <source>
        <strain>ATCC BAA-680 / CLIP 11262</strain>
    </source>
</reference>
<accession>Q927J4</accession>
<protein>
    <recommendedName>
        <fullName evidence="1">UPF0309 protein lin2794</fullName>
    </recommendedName>
</protein>
<sequence>MINNYIDITIRLLENILDNEADYVKEAGAKVAESIENDGVIHLFGCGHSHILTEEVFYRAGGLAAIHPILHEPLMLHEGAAASSVLERKNDYAKTFMAEEDIRSGDVMIVLSTSGRNPVPIDVAEIAREKGAFVIVITSLQYSASQKSRHTSGKRLSDTGDIVIDNGAVKGDAVLKSANFDIAFAPTSTVTGAVILQSIFAEAIEKMVNDNFTPPVFISGNVENADEHNQALVDKYNERIPLLGMNL</sequence>
<evidence type="ECO:0000255" key="1">
    <source>
        <dbReference type="HAMAP-Rule" id="MF_01240"/>
    </source>
</evidence>